<reference key="1">
    <citation type="journal article" date="2002" name="Proc. Natl. Acad. Sci. U.S.A.">
        <title>The Brucella suis genome reveals fundamental similarities between animal and plant pathogens and symbionts.</title>
        <authorList>
            <person name="Paulsen I.T."/>
            <person name="Seshadri R."/>
            <person name="Nelson K.E."/>
            <person name="Eisen J.A."/>
            <person name="Heidelberg J.F."/>
            <person name="Read T.D."/>
            <person name="Dodson R.J."/>
            <person name="Umayam L.A."/>
            <person name="Brinkac L.M."/>
            <person name="Beanan M.J."/>
            <person name="Daugherty S.C."/>
            <person name="DeBoy R.T."/>
            <person name="Durkin A.S."/>
            <person name="Kolonay J.F."/>
            <person name="Madupu R."/>
            <person name="Nelson W.C."/>
            <person name="Ayodeji B."/>
            <person name="Kraul M."/>
            <person name="Shetty J."/>
            <person name="Malek J.A."/>
            <person name="Van Aken S.E."/>
            <person name="Riedmuller S."/>
            <person name="Tettelin H."/>
            <person name="Gill S.R."/>
            <person name="White O."/>
            <person name="Salzberg S.L."/>
            <person name="Hoover D.L."/>
            <person name="Lindler L.E."/>
            <person name="Halling S.M."/>
            <person name="Boyle S.M."/>
            <person name="Fraser C.M."/>
        </authorList>
    </citation>
    <scope>NUCLEOTIDE SEQUENCE [LARGE SCALE GENOMIC DNA]</scope>
    <source>
        <strain>1330</strain>
    </source>
</reference>
<reference key="2">
    <citation type="journal article" date="2011" name="J. Bacteriol.">
        <title>Revised genome sequence of Brucella suis 1330.</title>
        <authorList>
            <person name="Tae H."/>
            <person name="Shallom S."/>
            <person name="Settlage R."/>
            <person name="Preston D."/>
            <person name="Adams L.G."/>
            <person name="Garner H.R."/>
        </authorList>
    </citation>
    <scope>NUCLEOTIDE SEQUENCE [LARGE SCALE GENOMIC DNA]</scope>
    <source>
        <strain>1330</strain>
    </source>
</reference>
<accession>Q8FWN5</accession>
<accession>G0KCE9</accession>
<proteinExistence type="inferred from homology"/>
<dbReference type="EC" id="5.1.3.9"/>
<dbReference type="EC" id="2.7.1.60"/>
<dbReference type="EMBL" id="AE014292">
    <property type="protein sequence ID" value="AAN33608.1"/>
    <property type="molecule type" value="Genomic_DNA"/>
</dbReference>
<dbReference type="EMBL" id="CP002998">
    <property type="protein sequence ID" value="AEM19887.1"/>
    <property type="molecule type" value="Genomic_DNA"/>
</dbReference>
<dbReference type="SMR" id="Q8FWN5"/>
<dbReference type="KEGG" id="bms:BRA0411"/>
<dbReference type="KEGG" id="bsi:BS1330_II0408"/>
<dbReference type="HOGENOM" id="CLU_536235_0_0_5"/>
<dbReference type="UniPathway" id="UPA00629">
    <property type="reaction ID" value="UER00681"/>
</dbReference>
<dbReference type="UniPathway" id="UPA00629">
    <property type="reaction ID" value="UER00682"/>
</dbReference>
<dbReference type="Proteomes" id="UP000007104">
    <property type="component" value="Chromosome II"/>
</dbReference>
<dbReference type="GO" id="GO:0005829">
    <property type="term" value="C:cytosol"/>
    <property type="evidence" value="ECO:0007669"/>
    <property type="project" value="TreeGrafter"/>
</dbReference>
<dbReference type="GO" id="GO:0005524">
    <property type="term" value="F:ATP binding"/>
    <property type="evidence" value="ECO:0007669"/>
    <property type="project" value="UniProtKB-KW"/>
</dbReference>
<dbReference type="GO" id="GO:0047465">
    <property type="term" value="F:N-acylglucosamine-6-phosphate 2-epimerase activity"/>
    <property type="evidence" value="ECO:0007669"/>
    <property type="project" value="UniProtKB-EC"/>
</dbReference>
<dbReference type="GO" id="GO:0009384">
    <property type="term" value="F:N-acylmannosamine kinase activity"/>
    <property type="evidence" value="ECO:0007669"/>
    <property type="project" value="UniProtKB-EC"/>
</dbReference>
<dbReference type="GO" id="GO:0006053">
    <property type="term" value="P:N-acetylmannosamine catabolic process"/>
    <property type="evidence" value="ECO:0007669"/>
    <property type="project" value="TreeGrafter"/>
</dbReference>
<dbReference type="GO" id="GO:0019262">
    <property type="term" value="P:N-acetylneuraminate catabolic process"/>
    <property type="evidence" value="ECO:0007669"/>
    <property type="project" value="UniProtKB-UniRule"/>
</dbReference>
<dbReference type="CDD" id="cd04729">
    <property type="entry name" value="NanE"/>
    <property type="match status" value="1"/>
</dbReference>
<dbReference type="FunFam" id="3.20.20.70:FF:000035">
    <property type="entry name" value="Putative N-acetylmannosamine-6-phosphate 2-epimerase"/>
    <property type="match status" value="1"/>
</dbReference>
<dbReference type="Gene3D" id="3.30.420.40">
    <property type="match status" value="2"/>
</dbReference>
<dbReference type="Gene3D" id="3.20.20.70">
    <property type="entry name" value="Aldolase class I"/>
    <property type="match status" value="1"/>
</dbReference>
<dbReference type="HAMAP" id="MF_01235">
    <property type="entry name" value="ManNAc6P_epimer"/>
    <property type="match status" value="1"/>
</dbReference>
<dbReference type="InterPro" id="IPR013785">
    <property type="entry name" value="Aldolase_TIM"/>
</dbReference>
<dbReference type="InterPro" id="IPR043129">
    <property type="entry name" value="ATPase_NBD"/>
</dbReference>
<dbReference type="InterPro" id="IPR007260">
    <property type="entry name" value="NanE"/>
</dbReference>
<dbReference type="InterPro" id="IPR011060">
    <property type="entry name" value="RibuloseP-bd_barrel"/>
</dbReference>
<dbReference type="InterPro" id="IPR000600">
    <property type="entry name" value="ROK"/>
</dbReference>
<dbReference type="NCBIfam" id="NF002231">
    <property type="entry name" value="PRK01130.1"/>
    <property type="match status" value="1"/>
</dbReference>
<dbReference type="PANTHER" id="PTHR36204">
    <property type="entry name" value="N-ACETYLMANNOSAMINE-6-PHOSPHATE 2-EPIMERASE-RELATED"/>
    <property type="match status" value="1"/>
</dbReference>
<dbReference type="PANTHER" id="PTHR36204:SF1">
    <property type="entry name" value="N-ACETYLMANNOSAMINE-6-PHOSPHATE 2-EPIMERASE-RELATED"/>
    <property type="match status" value="1"/>
</dbReference>
<dbReference type="Pfam" id="PF04131">
    <property type="entry name" value="NanE"/>
    <property type="match status" value="1"/>
</dbReference>
<dbReference type="Pfam" id="PF00480">
    <property type="entry name" value="ROK"/>
    <property type="match status" value="1"/>
</dbReference>
<dbReference type="SUPFAM" id="SSF53067">
    <property type="entry name" value="Actin-like ATPase domain"/>
    <property type="match status" value="1"/>
</dbReference>
<dbReference type="SUPFAM" id="SSF51366">
    <property type="entry name" value="Ribulose-phoshate binding barrel"/>
    <property type="match status" value="1"/>
</dbReference>
<gene>
    <name type="primary">nanEK</name>
    <name type="ordered locus">BRA0411</name>
    <name type="ordered locus">BS1330_II0408</name>
</gene>
<sequence length="525" mass="53867">MRGSPRNLCRVQGMIEEIVNRLRGKLIVSCQPVPESPFDNVASVVAYARAAEASGASGLRIEGAANVAATAQASTLPVIGLIKRDLDDSPVRITPFLEDVAALCDAGAAIVAVDATDRRRPVPAAELIGEIKRRGRIAMADISTLAEARNALAAGADIIGTTMSGYTGEGPTPKDPDLDLVAHCSRLGSFLIAEGRYNSPQQAGEAIRAGADAVVVGSAITRPEHITGWFRDAVESAAKPSSPVLAFDIGGTKTLAALVRGREILERRVMTTPASVGSESWIGAIASLSADWQGRYQRAAIAVTGRVDGEIWSSLNPETLAIPPDYPLGRRMGAALGAPVEVINDAQAAAWGENRFGAARGRDMVFLTISSGIGGGIVLGGRLIRGARGIAGSLGQVLVAGPSGFVRLETLASGFGIAKMALEAGHAGDARSVFSAAAAGEGWARRILLDAASQLAAAVAGLQAIVDPECIVIGGGVGMADGFLDMLREALGSHSAVMRPDIVAAELGADAGIIGVADLAATYFS</sequence>
<keyword id="KW-0067">ATP-binding</keyword>
<keyword id="KW-0119">Carbohydrate metabolism</keyword>
<keyword id="KW-0413">Isomerase</keyword>
<keyword id="KW-0418">Kinase</keyword>
<keyword id="KW-0511">Multifunctional enzyme</keyword>
<keyword id="KW-0547">Nucleotide-binding</keyword>
<keyword id="KW-0808">Transferase</keyword>
<evidence type="ECO:0000250" key="1"/>
<evidence type="ECO:0000255" key="2"/>
<evidence type="ECO:0000305" key="3"/>
<name>NANEK_BRUSU</name>
<feature type="chain" id="PRO_0000179824" description="Bifunctional enzyme NanE/NanK">
    <location>
        <begin position="1"/>
        <end position="525"/>
    </location>
</feature>
<feature type="region of interest" description="ManNAc-6-P epimerase">
    <location>
        <begin position="1"/>
        <end position="241"/>
    </location>
</feature>
<feature type="region of interest" description="ManNAc kinase">
    <location>
        <begin position="242"/>
        <end position="525"/>
    </location>
</feature>
<feature type="binding site" evidence="2">
    <location>
        <begin position="246"/>
        <end position="253"/>
    </location>
    <ligand>
        <name>ATP</name>
        <dbReference type="ChEBI" id="CHEBI:30616"/>
    </ligand>
</feature>
<feature type="binding site" evidence="2">
    <location>
        <begin position="372"/>
        <end position="379"/>
    </location>
    <ligand>
        <name>ATP</name>
        <dbReference type="ChEBI" id="CHEBI:30616"/>
    </ligand>
</feature>
<protein>
    <recommendedName>
        <fullName>Bifunctional enzyme NanE/NanK</fullName>
    </recommendedName>
    <domain>
        <recommendedName>
            <fullName>Putative N-acetylmannosamine-6-phosphate 2-epimerase</fullName>
            <ecNumber>5.1.3.9</ecNumber>
        </recommendedName>
        <alternativeName>
            <fullName>ManNAc-6-P epimerase</fullName>
        </alternativeName>
    </domain>
    <domain>
        <recommendedName>
            <fullName>N-acetylmannosamine kinase</fullName>
            <ecNumber>2.7.1.60</ecNumber>
        </recommendedName>
        <alternativeName>
            <fullName>ManNAc kinase</fullName>
        </alternativeName>
        <alternativeName>
            <fullName>N-acetyl-D-mannosamine kinase</fullName>
        </alternativeName>
    </domain>
</protein>
<comment type="function">
    <text evidence="3">Converts N-acetylmannosamine-6-phosphate (ManNAc-6-P) to N-acetylglucosamine-6-phosphate (GlcNAc-6-P).</text>
</comment>
<comment type="function">
    <text evidence="1">Catalyzes the phosphorylation of N-acetylmannosamine (ManNAc) to ManNAc-6-P.</text>
</comment>
<comment type="catalytic activity">
    <reaction>
        <text>an N-acyl-D-glucosamine 6-phosphate = an N-acyl-D-mannosamine 6-phosphate</text>
        <dbReference type="Rhea" id="RHEA:23932"/>
        <dbReference type="ChEBI" id="CHEBI:57599"/>
        <dbReference type="ChEBI" id="CHEBI:57666"/>
        <dbReference type="EC" id="5.1.3.9"/>
    </reaction>
</comment>
<comment type="catalytic activity">
    <reaction>
        <text>an N-acyl-D-mannosamine + ATP = an N-acyl-D-mannosamine 6-phosphate + ADP + H(+)</text>
        <dbReference type="Rhea" id="RHEA:23832"/>
        <dbReference type="ChEBI" id="CHEBI:15378"/>
        <dbReference type="ChEBI" id="CHEBI:16062"/>
        <dbReference type="ChEBI" id="CHEBI:30616"/>
        <dbReference type="ChEBI" id="CHEBI:57666"/>
        <dbReference type="ChEBI" id="CHEBI:456216"/>
        <dbReference type="EC" id="2.7.1.60"/>
    </reaction>
</comment>
<comment type="pathway">
    <text>Amino-sugar metabolism; N-acetylneuraminate degradation; D-fructose 6-phosphate from N-acetylneuraminate: step 2/5.</text>
</comment>
<comment type="pathway">
    <text>Amino-sugar metabolism; N-acetylneuraminate degradation; D-fructose 6-phosphate from N-acetylneuraminate: step 3/5.</text>
</comment>
<comment type="similarity">
    <text evidence="3">In the N-terminal section; belongs to the NanE family.</text>
</comment>
<comment type="similarity">
    <text evidence="3">In the C-terminal section; belongs to the ROK (NagC/XylR) family. NanK subfamily.</text>
</comment>
<organism>
    <name type="scientific">Brucella suis biovar 1 (strain 1330)</name>
    <dbReference type="NCBI Taxonomy" id="204722"/>
    <lineage>
        <taxon>Bacteria</taxon>
        <taxon>Pseudomonadati</taxon>
        <taxon>Pseudomonadota</taxon>
        <taxon>Alphaproteobacteria</taxon>
        <taxon>Hyphomicrobiales</taxon>
        <taxon>Brucellaceae</taxon>
        <taxon>Brucella/Ochrobactrum group</taxon>
        <taxon>Brucella</taxon>
    </lineage>
</organism>